<organism>
    <name type="scientific">African swine fever virus (isolate Pig/Kenya/KEN-50/1950)</name>
    <name type="common">ASFV</name>
    <dbReference type="NCBI Taxonomy" id="561445"/>
    <lineage>
        <taxon>Viruses</taxon>
        <taxon>Varidnaviria</taxon>
        <taxon>Bamfordvirae</taxon>
        <taxon>Nucleocytoviricota</taxon>
        <taxon>Pokkesviricetes</taxon>
        <taxon>Asfuvirales</taxon>
        <taxon>Asfarviridae</taxon>
        <taxon>Asfivirus</taxon>
        <taxon>African swine fever virus</taxon>
    </lineage>
</organism>
<dbReference type="EMBL" id="AY261360">
    <property type="status" value="NOT_ANNOTATED_CDS"/>
    <property type="molecule type" value="Genomic_DNA"/>
</dbReference>
<dbReference type="SMR" id="P0C754"/>
<dbReference type="Proteomes" id="UP000000861">
    <property type="component" value="Segment"/>
</dbReference>
<dbReference type="GO" id="GO:0004865">
    <property type="term" value="F:protein serine/threonine phosphatase inhibitor activity"/>
    <property type="evidence" value="ECO:0007669"/>
    <property type="project" value="UniProtKB-KW"/>
</dbReference>
<dbReference type="GO" id="GO:0060255">
    <property type="term" value="P:regulation of macromolecule metabolic process"/>
    <property type="evidence" value="ECO:0007669"/>
    <property type="project" value="UniProtKB-ARBA"/>
</dbReference>
<dbReference type="GO" id="GO:0080090">
    <property type="term" value="P:regulation of primary metabolic process"/>
    <property type="evidence" value="ECO:0007669"/>
    <property type="project" value="UniProtKB-ARBA"/>
</dbReference>
<dbReference type="GO" id="GO:0034976">
    <property type="term" value="P:response to endoplasmic reticulum stress"/>
    <property type="evidence" value="ECO:0007669"/>
    <property type="project" value="TreeGrafter"/>
</dbReference>
<dbReference type="GO" id="GO:0052170">
    <property type="term" value="P:symbiont-mediated suppression of host innate immune response"/>
    <property type="evidence" value="ECO:0007669"/>
    <property type="project" value="UniProtKB-KW"/>
</dbReference>
<dbReference type="GO" id="GO:0039606">
    <property type="term" value="P:symbiont-mediated suppression of host translation initiation"/>
    <property type="evidence" value="ECO:0007669"/>
    <property type="project" value="UniProtKB-KW"/>
</dbReference>
<dbReference type="GO" id="GO:0039502">
    <property type="term" value="P:symbiont-mediated suppression of host type I interferon-mediated signaling pathway"/>
    <property type="evidence" value="ECO:0007669"/>
    <property type="project" value="UniProtKB-KW"/>
</dbReference>
<dbReference type="InterPro" id="IPR051254">
    <property type="entry name" value="PPP1R15"/>
</dbReference>
<dbReference type="InterPro" id="IPR019523">
    <property type="entry name" value="Prot_Pase1_reg-su15A/B_C"/>
</dbReference>
<dbReference type="PANTHER" id="PTHR16489">
    <property type="entry name" value="GH11727P"/>
    <property type="match status" value="1"/>
</dbReference>
<dbReference type="PANTHER" id="PTHR16489:SF12">
    <property type="entry name" value="GH11727P"/>
    <property type="match status" value="1"/>
</dbReference>
<dbReference type="Pfam" id="PF10488">
    <property type="entry name" value="PP1c_bdg"/>
    <property type="match status" value="1"/>
</dbReference>
<gene>
    <name type="ordered locus">Ken-167</name>
</gene>
<reference key="1">
    <citation type="submission" date="2003-03" db="EMBL/GenBank/DDBJ databases">
        <title>African swine fever virus genomes.</title>
        <authorList>
            <person name="Kutish G.F."/>
            <person name="Rock D.L."/>
        </authorList>
    </citation>
    <scope>NUCLEOTIDE SEQUENCE [LARGE SCALE GENOMIC DNA]</scope>
</reference>
<organismHost>
    <name type="scientific">Ornithodoros</name>
    <name type="common">relapsing fever ticks</name>
    <dbReference type="NCBI Taxonomy" id="6937"/>
</organismHost>
<organismHost>
    <name type="scientific">Phacochoerus aethiopicus</name>
    <name type="common">Warthog</name>
    <dbReference type="NCBI Taxonomy" id="85517"/>
</organismHost>
<organismHost>
    <name type="scientific">Phacochoerus africanus</name>
    <name type="common">Warthog</name>
    <dbReference type="NCBI Taxonomy" id="41426"/>
</organismHost>
<organismHost>
    <name type="scientific">Potamochoerus larvatus</name>
    <name type="common">Bushpig</name>
    <dbReference type="NCBI Taxonomy" id="273792"/>
</organismHost>
<organismHost>
    <name type="scientific">Sus scrofa</name>
    <name type="common">Pig</name>
    <dbReference type="NCBI Taxonomy" id="9823"/>
</organismHost>
<accession>P0C754</accession>
<feature type="chain" id="PRO_0000379084" description="Protein DP71L">
    <location>
        <begin position="1"/>
        <end position="185"/>
    </location>
</feature>
<feature type="region of interest" description="Disordered" evidence="2">
    <location>
        <begin position="1"/>
        <end position="38"/>
    </location>
</feature>
<feature type="region of interest" description="Important for host CHOP inhibition" evidence="1">
    <location>
        <begin position="126"/>
        <end position="128"/>
    </location>
</feature>
<feature type="region of interest" description="Important for host CHOP inhibition" evidence="1">
    <location>
        <begin position="170"/>
        <end position="174"/>
    </location>
</feature>
<feature type="compositionally biased region" description="Basic residues" evidence="2">
    <location>
        <begin position="1"/>
        <end position="15"/>
    </location>
</feature>
<comment type="function">
    <text evidence="1">Interacts with the host phosphatase PP1 catalytic subunit (PPP1CB) and recruits it to dephosphorylate EIF2S1/eIF2alpha and therefore restores the host translation that has been shut-down by the host. Also inhibits the EIF2S1/eIF2alpha-ATF4-DDIT3/CHOP pathway.</text>
</comment>
<comment type="subunit">
    <text evidence="1">Interacts (via C-terminus) with host PPP1CB.</text>
</comment>
<comment type="induction">
    <text evidence="3">Expressed in the late phase of the viral replicative cycle.</text>
</comment>
<comment type="similarity">
    <text evidence="3">Belongs to the asfivirus DP71L family.</text>
</comment>
<name>DP71L_ASFK5</name>
<protein>
    <recommendedName>
        <fullName>Protein DP71L</fullName>
    </recommendedName>
    <alternativeName>
        <fullName>MyD116 homolog</fullName>
    </alternativeName>
</protein>
<evidence type="ECO:0000250" key="1">
    <source>
        <dbReference type="UniProtKB" id="Q65212"/>
    </source>
</evidence>
<evidence type="ECO:0000256" key="2">
    <source>
        <dbReference type="SAM" id="MobiDB-lite"/>
    </source>
</evidence>
<evidence type="ECO:0000305" key="3"/>
<sequence>MSRRNKKRSRRRRKKPLNDIQPGPSKSSAQDEPIKSVSHHLSKIGTNPTLAFILGGNEDLSDDSDWDENFSLENTLMPLNEVSLNDKHNSKHFNKGFDNNTALHEVNTKWEAFYSSVKIRQRNVKVHFATDDILVDVREADDIDRKGPWEQAAVDRLRFQRRITDTEEILSTVFLRKKLNPMEHE</sequence>
<proteinExistence type="inferred from homology"/>
<keyword id="KW-0945">Host-virus interaction</keyword>
<keyword id="KW-1090">Inhibition of host innate immune response by virus</keyword>
<keyword id="KW-1114">Inhibition of host interferon signaling pathway by virus</keyword>
<keyword id="KW-0922">Interferon antiviral system evasion</keyword>
<keyword id="KW-0426">Late protein</keyword>
<keyword id="KW-1126">Modulation of host PP1 activity by virus</keyword>
<keyword id="KW-0899">Viral immunoevasion</keyword>